<protein>
    <recommendedName>
        <fullName evidence="1">3-isopropylmalate dehydrogenase</fullName>
        <ecNumber evidence="1">1.1.1.85</ecNumber>
    </recommendedName>
    <alternativeName>
        <fullName evidence="1">3-IPM-DH</fullName>
    </alternativeName>
    <alternativeName>
        <fullName evidence="1">Beta-IPM dehydrogenase</fullName>
        <shortName evidence="1">IMDH</shortName>
    </alternativeName>
</protein>
<reference key="1">
    <citation type="journal article" date="2001" name="J. Bacteriol.">
        <title>Vertical transmission of biosynthetic plasmids in aphid endosymbionts (Buchnera).</title>
        <authorList>
            <person name="Wernegreen J.J."/>
            <person name="Moran N.A."/>
        </authorList>
    </citation>
    <scope>NUCLEOTIDE SEQUENCE [GENOMIC DNA]</scope>
</reference>
<comment type="function">
    <text evidence="1">Catalyzes the oxidation of 3-carboxy-2-hydroxy-4-methylpentanoate (3-isopropylmalate) to 3-carboxy-4-methyl-2-oxopentanoate. The product decarboxylates to 4-methyl-2 oxopentanoate.</text>
</comment>
<comment type="catalytic activity">
    <reaction evidence="1">
        <text>(2R,3S)-3-isopropylmalate + NAD(+) = 4-methyl-2-oxopentanoate + CO2 + NADH</text>
        <dbReference type="Rhea" id="RHEA:32271"/>
        <dbReference type="ChEBI" id="CHEBI:16526"/>
        <dbReference type="ChEBI" id="CHEBI:17865"/>
        <dbReference type="ChEBI" id="CHEBI:35121"/>
        <dbReference type="ChEBI" id="CHEBI:57540"/>
        <dbReference type="ChEBI" id="CHEBI:57945"/>
        <dbReference type="EC" id="1.1.1.85"/>
    </reaction>
</comment>
<comment type="cofactor">
    <cofactor evidence="1">
        <name>Mg(2+)</name>
        <dbReference type="ChEBI" id="CHEBI:18420"/>
    </cofactor>
    <cofactor evidence="1">
        <name>Mn(2+)</name>
        <dbReference type="ChEBI" id="CHEBI:29035"/>
    </cofactor>
    <text evidence="1">Binds 1 Mg(2+) or Mn(2+) ion per subunit.</text>
</comment>
<comment type="pathway">
    <text evidence="1">Amino-acid biosynthesis; L-leucine biosynthesis; L-leucine from 3-methyl-2-oxobutanoate: step 3/4.</text>
</comment>
<comment type="subunit">
    <text evidence="1">Homodimer.</text>
</comment>
<comment type="subcellular location">
    <subcellularLocation>
        <location evidence="1">Cytoplasm</location>
    </subcellularLocation>
</comment>
<comment type="similarity">
    <text evidence="1">Belongs to the isocitrate and isopropylmalate dehydrogenases family. LeuB type 1 subfamily.</text>
</comment>
<keyword id="KW-0028">Amino-acid biosynthesis</keyword>
<keyword id="KW-0100">Branched-chain amino acid biosynthesis</keyword>
<keyword id="KW-0963">Cytoplasm</keyword>
<keyword id="KW-0432">Leucine biosynthesis</keyword>
<keyword id="KW-0460">Magnesium</keyword>
<keyword id="KW-0464">Manganese</keyword>
<keyword id="KW-0479">Metal-binding</keyword>
<keyword id="KW-0520">NAD</keyword>
<keyword id="KW-0560">Oxidoreductase</keyword>
<keyword id="KW-0614">Plasmid</keyword>
<accession>Q9EVH8</accession>
<geneLocation type="plasmid">
    <name>pLeu</name>
    <name>pBAp1</name>
</geneLocation>
<sequence length="363" mass="40493">MKQKYRIAILPGDGIGPEVMREAYKILSILKDHFSLSLEIQEFNIGGSAIDQEGIALPKKTLLGCQNSDAILFGSVGGKRWDHLPINERPERASLLPLRKHFNLFANLRPAKLYSELQHLSPIRSNIIKNGFDILCVRELTGGIYFGKPSDRVKKNNVEYAFDTEVYYDYEINRIAHLAFQLARTRKFKVCSIDKSNVLNSSILWREVVEKVSKMYPDVHLSHLYIDNATMQIIKNPNQFDVLLCSNLFGDIISDECAVITGSIGMLPSASFNEKNFGLYEPAGGSAPDIAGKNTANPIAQILSLSMLVRYGMKLNKIADKIDDAVALSLKAGYRTADISNDNNFLKTNEMGDVIANFLINGK</sequence>
<name>LEU3_BUCUH</name>
<proteinExistence type="inferred from homology"/>
<organism>
    <name type="scientific">Buchnera aphidicola subsp. Uroleucon helianthicola</name>
    <dbReference type="NCBI Taxonomy" id="118115"/>
    <lineage>
        <taxon>Bacteria</taxon>
        <taxon>Pseudomonadati</taxon>
        <taxon>Pseudomonadota</taxon>
        <taxon>Gammaproteobacteria</taxon>
        <taxon>Enterobacterales</taxon>
        <taxon>Erwiniaceae</taxon>
        <taxon>Buchnera</taxon>
    </lineage>
</organism>
<evidence type="ECO:0000255" key="1">
    <source>
        <dbReference type="HAMAP-Rule" id="MF_01033"/>
    </source>
</evidence>
<dbReference type="EC" id="1.1.1.85" evidence="1"/>
<dbReference type="EMBL" id="AF197451">
    <property type="protein sequence ID" value="AAG31387.1"/>
    <property type="molecule type" value="Genomic_DNA"/>
</dbReference>
<dbReference type="SMR" id="Q9EVH8"/>
<dbReference type="UniPathway" id="UPA00048">
    <property type="reaction ID" value="UER00072"/>
</dbReference>
<dbReference type="GO" id="GO:0005829">
    <property type="term" value="C:cytosol"/>
    <property type="evidence" value="ECO:0007669"/>
    <property type="project" value="TreeGrafter"/>
</dbReference>
<dbReference type="GO" id="GO:0003862">
    <property type="term" value="F:3-isopropylmalate dehydrogenase activity"/>
    <property type="evidence" value="ECO:0007669"/>
    <property type="project" value="UniProtKB-UniRule"/>
</dbReference>
<dbReference type="GO" id="GO:0000287">
    <property type="term" value="F:magnesium ion binding"/>
    <property type="evidence" value="ECO:0007669"/>
    <property type="project" value="InterPro"/>
</dbReference>
<dbReference type="GO" id="GO:0051287">
    <property type="term" value="F:NAD binding"/>
    <property type="evidence" value="ECO:0007669"/>
    <property type="project" value="InterPro"/>
</dbReference>
<dbReference type="GO" id="GO:0009098">
    <property type="term" value="P:L-leucine biosynthetic process"/>
    <property type="evidence" value="ECO:0007669"/>
    <property type="project" value="UniProtKB-UniRule"/>
</dbReference>
<dbReference type="FunFam" id="3.40.718.10:FF:000006">
    <property type="entry name" value="3-isopropylmalate dehydrogenase"/>
    <property type="match status" value="1"/>
</dbReference>
<dbReference type="Gene3D" id="3.40.718.10">
    <property type="entry name" value="Isopropylmalate Dehydrogenase"/>
    <property type="match status" value="1"/>
</dbReference>
<dbReference type="HAMAP" id="MF_01033">
    <property type="entry name" value="LeuB_type1"/>
    <property type="match status" value="1"/>
</dbReference>
<dbReference type="InterPro" id="IPR019818">
    <property type="entry name" value="IsoCit/isopropylmalate_DH_CS"/>
</dbReference>
<dbReference type="InterPro" id="IPR024084">
    <property type="entry name" value="IsoPropMal-DH-like_dom"/>
</dbReference>
<dbReference type="InterPro" id="IPR004429">
    <property type="entry name" value="Isopropylmalate_DH"/>
</dbReference>
<dbReference type="NCBIfam" id="TIGR00169">
    <property type="entry name" value="leuB"/>
    <property type="match status" value="1"/>
</dbReference>
<dbReference type="PANTHER" id="PTHR42979">
    <property type="entry name" value="3-ISOPROPYLMALATE DEHYDROGENASE"/>
    <property type="match status" value="1"/>
</dbReference>
<dbReference type="PANTHER" id="PTHR42979:SF1">
    <property type="entry name" value="3-ISOPROPYLMALATE DEHYDROGENASE"/>
    <property type="match status" value="1"/>
</dbReference>
<dbReference type="Pfam" id="PF00180">
    <property type="entry name" value="Iso_dh"/>
    <property type="match status" value="1"/>
</dbReference>
<dbReference type="SMART" id="SM01329">
    <property type="entry name" value="Iso_dh"/>
    <property type="match status" value="1"/>
</dbReference>
<dbReference type="SUPFAM" id="SSF53659">
    <property type="entry name" value="Isocitrate/Isopropylmalate dehydrogenase-like"/>
    <property type="match status" value="1"/>
</dbReference>
<dbReference type="PROSITE" id="PS00470">
    <property type="entry name" value="IDH_IMDH"/>
    <property type="match status" value="1"/>
</dbReference>
<gene>
    <name evidence="1" type="primary">leuB</name>
</gene>
<feature type="chain" id="PRO_0000083666" description="3-isopropylmalate dehydrogenase">
    <location>
        <begin position="1"/>
        <end position="363"/>
    </location>
</feature>
<feature type="binding site" evidence="1">
    <location>
        <begin position="78"/>
        <end position="91"/>
    </location>
    <ligand>
        <name>NAD(+)</name>
        <dbReference type="ChEBI" id="CHEBI:57540"/>
    </ligand>
</feature>
<feature type="binding site" evidence="1">
    <location>
        <position position="99"/>
    </location>
    <ligand>
        <name>substrate</name>
    </ligand>
</feature>
<feature type="binding site" evidence="1">
    <location>
        <position position="109"/>
    </location>
    <ligand>
        <name>substrate</name>
    </ligand>
</feature>
<feature type="binding site" evidence="1">
    <location>
        <position position="138"/>
    </location>
    <ligand>
        <name>substrate</name>
    </ligand>
</feature>
<feature type="binding site" evidence="1">
    <location>
        <position position="227"/>
    </location>
    <ligand>
        <name>Mg(2+)</name>
        <dbReference type="ChEBI" id="CHEBI:18420"/>
    </ligand>
</feature>
<feature type="binding site" evidence="1">
    <location>
        <position position="227"/>
    </location>
    <ligand>
        <name>substrate</name>
    </ligand>
</feature>
<feature type="binding site" evidence="1">
    <location>
        <position position="251"/>
    </location>
    <ligand>
        <name>Mg(2+)</name>
        <dbReference type="ChEBI" id="CHEBI:18420"/>
    </ligand>
</feature>
<feature type="binding site" evidence="1">
    <location>
        <position position="255"/>
    </location>
    <ligand>
        <name>Mg(2+)</name>
        <dbReference type="ChEBI" id="CHEBI:18420"/>
    </ligand>
</feature>
<feature type="binding site" evidence="1">
    <location>
        <begin position="285"/>
        <end position="297"/>
    </location>
    <ligand>
        <name>NAD(+)</name>
        <dbReference type="ChEBI" id="CHEBI:57540"/>
    </ligand>
</feature>
<feature type="site" description="Important for catalysis" evidence="1">
    <location>
        <position position="145"/>
    </location>
</feature>
<feature type="site" description="Important for catalysis" evidence="1">
    <location>
        <position position="195"/>
    </location>
</feature>